<name>MT_CARMA</name>
<dbReference type="PIR" id="S43367">
    <property type="entry name" value="S43367"/>
</dbReference>
<dbReference type="SMR" id="P55948"/>
<dbReference type="GO" id="GO:0046872">
    <property type="term" value="F:metal ion binding"/>
    <property type="evidence" value="ECO:0007669"/>
    <property type="project" value="UniProtKB-KW"/>
</dbReference>
<dbReference type="InterPro" id="IPR002045">
    <property type="entry name" value="Metalthion_crustacean"/>
</dbReference>
<dbReference type="InterPro" id="IPR017854">
    <property type="entry name" value="Metalthion_dom_sf"/>
</dbReference>
<dbReference type="PRINTS" id="PR00858">
    <property type="entry name" value="MTCRUSTACEAN"/>
</dbReference>
<dbReference type="SUPFAM" id="SSF57868">
    <property type="entry name" value="Metallothionein"/>
    <property type="match status" value="2"/>
</dbReference>
<comment type="function">
    <text>Metallothioneins have a high content of cysteine residues that bind various heavy metals. Class I MTS in marine crustacea are involved in the sequestration of elevated levels of heavy-metal ions.</text>
</comment>
<comment type="induction">
    <text>By cadmium.</text>
</comment>
<comment type="similarity">
    <text evidence="2">Belongs to the metallothionein superfamily. Type 3 family.</text>
</comment>
<evidence type="ECO:0000250" key="1">
    <source>
        <dbReference type="UniProtKB" id="P29499"/>
    </source>
</evidence>
<evidence type="ECO:0000305" key="2"/>
<reference key="1">
    <citation type="journal article" date="1994" name="Biochem. J.">
        <title>Purification and characterization of a cadmium-induced metallothionein from the shore crab Carcinus maenas (L.).</title>
        <authorList>
            <person name="Pedersen K.L."/>
            <person name="Pedersen S.N."/>
            <person name="Hoejrup P."/>
            <person name="Andersen J.S."/>
            <person name="Roepstorff P."/>
            <person name="Knudsen J."/>
            <person name="Depledge M.H."/>
        </authorList>
    </citation>
    <scope>PROTEIN SEQUENCE</scope>
    <source>
        <tissue>Midgut</tissue>
    </source>
</reference>
<organism>
    <name type="scientific">Carcinus maenas</name>
    <name type="common">Common shore crab</name>
    <name type="synonym">Green crab</name>
    <dbReference type="NCBI Taxonomy" id="6759"/>
    <lineage>
        <taxon>Eukaryota</taxon>
        <taxon>Metazoa</taxon>
        <taxon>Ecdysozoa</taxon>
        <taxon>Arthropoda</taxon>
        <taxon>Crustacea</taxon>
        <taxon>Multicrustacea</taxon>
        <taxon>Malacostraca</taxon>
        <taxon>Eumalacostraca</taxon>
        <taxon>Eucarida</taxon>
        <taxon>Decapoda</taxon>
        <taxon>Pleocyemata</taxon>
        <taxon>Brachyura</taxon>
        <taxon>Eubrachyura</taxon>
        <taxon>Portunoidea</taxon>
        <taxon>Carcinidae</taxon>
        <taxon>Carcinus</taxon>
    </lineage>
</organism>
<proteinExistence type="evidence at protein level"/>
<sequence>MPDPCCIDKCECKEGGCKAGCKCTSCRCTPCEKCSSGCKCTTKEDCCKTCTKPCSCCP</sequence>
<accession>P55948</accession>
<protein>
    <recommendedName>
        <fullName>Metallothionein</fullName>
        <shortName>MT</shortName>
    </recommendedName>
</protein>
<feature type="chain" id="PRO_0000197339" description="Metallothionein">
    <location>
        <begin position="1"/>
        <end position="58"/>
    </location>
</feature>
<feature type="region of interest" description="Beta">
    <location>
        <begin position="1"/>
        <end position="29"/>
    </location>
</feature>
<feature type="region of interest" description="Alpha">
    <location>
        <begin position="30"/>
        <end position="58"/>
    </location>
</feature>
<feature type="binding site" evidence="1">
    <location>
        <position position="5"/>
    </location>
    <ligand>
        <name>a divalent metal cation</name>
        <dbReference type="ChEBI" id="CHEBI:60240"/>
        <label>1</label>
        <note>in cluster B</note>
    </ligand>
</feature>
<feature type="binding site" evidence="1">
    <location>
        <position position="6"/>
    </location>
    <ligand>
        <name>a divalent metal cation</name>
        <dbReference type="ChEBI" id="CHEBI:60240"/>
        <label>1</label>
        <note>in cluster B</note>
    </ligand>
</feature>
<feature type="binding site" evidence="1">
    <location>
        <position position="6"/>
    </location>
    <ligand>
        <name>a divalent metal cation</name>
        <dbReference type="ChEBI" id="CHEBI:60240"/>
        <label>2</label>
        <note>in cluster B</note>
    </ligand>
</feature>
<feature type="binding site" evidence="1">
    <location>
        <position position="10"/>
    </location>
    <ligand>
        <name>a divalent metal cation</name>
        <dbReference type="ChEBI" id="CHEBI:60240"/>
        <label>2</label>
        <note>in cluster B</note>
    </ligand>
</feature>
<feature type="binding site" evidence="1">
    <location>
        <position position="12"/>
    </location>
    <ligand>
        <name>a divalent metal cation</name>
        <dbReference type="ChEBI" id="CHEBI:60240"/>
        <label>3</label>
        <note>in cluster B</note>
    </ligand>
</feature>
<feature type="binding site" evidence="1">
    <location>
        <position position="17"/>
    </location>
    <ligand>
        <name>a divalent metal cation</name>
        <dbReference type="ChEBI" id="CHEBI:60240"/>
        <label>1</label>
        <note>in cluster B</note>
    </ligand>
</feature>
<feature type="binding site" evidence="1">
    <location>
        <position position="17"/>
    </location>
    <ligand>
        <name>a divalent metal cation</name>
        <dbReference type="ChEBI" id="CHEBI:60240"/>
        <label>3</label>
        <note>in cluster B</note>
    </ligand>
</feature>
<feature type="binding site" evidence="1">
    <location>
        <position position="21"/>
    </location>
    <ligand>
        <name>a divalent metal cation</name>
        <dbReference type="ChEBI" id="CHEBI:60240"/>
        <label>1</label>
        <note>in cluster B</note>
    </ligand>
</feature>
<feature type="binding site" evidence="1">
    <location>
        <position position="23"/>
    </location>
    <ligand>
        <name>a divalent metal cation</name>
        <dbReference type="ChEBI" id="CHEBI:60240"/>
        <label>2</label>
        <note>in cluster B</note>
    </ligand>
</feature>
<feature type="binding site" evidence="1">
    <location>
        <position position="26"/>
    </location>
    <ligand>
        <name>a divalent metal cation</name>
        <dbReference type="ChEBI" id="CHEBI:60240"/>
        <label>2</label>
        <note>in cluster B</note>
    </ligand>
</feature>
<feature type="binding site" evidence="1">
    <location>
        <position position="26"/>
    </location>
    <ligand>
        <name>a divalent metal cation</name>
        <dbReference type="ChEBI" id="CHEBI:60240"/>
        <label>3</label>
        <note>in cluster B</note>
    </ligand>
</feature>
<feature type="binding site" evidence="1">
    <location>
        <position position="28"/>
    </location>
    <ligand>
        <name>a divalent metal cation</name>
        <dbReference type="ChEBI" id="CHEBI:60240"/>
        <label>3</label>
        <note>in cluster B</note>
    </ligand>
</feature>
<feature type="binding site" evidence="1">
    <location>
        <position position="31"/>
    </location>
    <ligand>
        <name>a divalent metal cation</name>
        <dbReference type="ChEBI" id="CHEBI:60240"/>
        <label>4</label>
        <note>in cluster A</note>
    </ligand>
</feature>
<feature type="binding site" evidence="1">
    <location>
        <position position="34"/>
    </location>
    <ligand>
        <name>a divalent metal cation</name>
        <dbReference type="ChEBI" id="CHEBI:60240"/>
        <label>4</label>
        <note>in cluster A</note>
    </ligand>
</feature>
<feature type="binding site" evidence="1">
    <location>
        <position position="34"/>
    </location>
    <ligand>
        <name>a divalent metal cation</name>
        <dbReference type="ChEBI" id="CHEBI:60240"/>
        <label>5</label>
        <note>in cluster A</note>
    </ligand>
</feature>
<feature type="binding site" evidence="1">
    <location>
        <position position="38"/>
    </location>
    <ligand>
        <name>a divalent metal cation</name>
        <dbReference type="ChEBI" id="CHEBI:60240"/>
        <label>5</label>
        <note>in cluster A</note>
    </ligand>
</feature>
<feature type="binding site" evidence="1">
    <location>
        <position position="40"/>
    </location>
    <ligand>
        <name>a divalent metal cation</name>
        <dbReference type="ChEBI" id="CHEBI:60240"/>
        <label>6</label>
        <note>in cluster A</note>
    </ligand>
</feature>
<feature type="binding site" evidence="1">
    <location>
        <position position="46"/>
    </location>
    <ligand>
        <name>a divalent metal cation</name>
        <dbReference type="ChEBI" id="CHEBI:60240"/>
        <label>6</label>
        <note>in cluster A</note>
    </ligand>
</feature>
<feature type="binding site" evidence="1">
    <location>
        <position position="50"/>
    </location>
    <ligand>
        <name>a divalent metal cation</name>
        <dbReference type="ChEBI" id="CHEBI:60240"/>
        <label>4</label>
        <note>in cluster A</note>
    </ligand>
</feature>
<feature type="binding site" evidence="1">
    <location>
        <position position="50"/>
    </location>
    <ligand>
        <name>a divalent metal cation</name>
        <dbReference type="ChEBI" id="CHEBI:60240"/>
        <label>6</label>
        <note>in cluster A</note>
    </ligand>
</feature>
<feature type="binding site" evidence="1">
    <location>
        <position position="54"/>
    </location>
    <ligand>
        <name>a divalent metal cation</name>
        <dbReference type="ChEBI" id="CHEBI:60240"/>
        <label>4</label>
        <note>in cluster A</note>
    </ligand>
</feature>
<feature type="binding site" evidence="1">
    <location>
        <position position="56"/>
    </location>
    <ligand>
        <name>a divalent metal cation</name>
        <dbReference type="ChEBI" id="CHEBI:60240"/>
        <label>5</label>
        <note>in cluster A</note>
    </ligand>
</feature>
<feature type="binding site" evidence="1">
    <location>
        <position position="57"/>
    </location>
    <ligand>
        <name>a divalent metal cation</name>
        <dbReference type="ChEBI" id="CHEBI:60240"/>
        <label>5</label>
        <note>in cluster A</note>
    </ligand>
</feature>
<feature type="binding site" evidence="1">
    <location>
        <position position="57"/>
    </location>
    <ligand>
        <name>a divalent metal cation</name>
        <dbReference type="ChEBI" id="CHEBI:60240"/>
        <label>6</label>
        <note>in cluster A</note>
    </ligand>
</feature>
<feature type="sequence variant" description="In variant isolated in low cadmium concentration.">
    <location>
        <position position="1"/>
    </location>
</feature>
<keyword id="KW-0104">Cadmium</keyword>
<keyword id="KW-0903">Direct protein sequencing</keyword>
<keyword id="KW-0479">Metal-binding</keyword>
<keyword id="KW-0480">Metal-thiolate cluster</keyword>